<evidence type="ECO:0000250" key="1"/>
<evidence type="ECO:0000255" key="2"/>
<evidence type="ECO:0000305" key="3"/>
<feature type="signal peptide" evidence="2">
    <location>
        <begin position="1"/>
        <end position="22"/>
    </location>
</feature>
<feature type="propeptide" id="PRO_0000404730" evidence="1">
    <location>
        <begin position="23"/>
        <end position="49"/>
    </location>
</feature>
<feature type="peptide" id="PRO_0000404731" description="Conotoxin PnMKLT1-0121">
    <location>
        <begin position="52"/>
        <end position="80"/>
    </location>
</feature>
<feature type="disulfide bond" evidence="1">
    <location>
        <begin position="52"/>
        <end position="67"/>
    </location>
</feature>
<feature type="disulfide bond" evidence="1">
    <location>
        <begin position="59"/>
        <end position="71"/>
    </location>
</feature>
<feature type="disulfide bond" evidence="1">
    <location>
        <begin position="66"/>
        <end position="75"/>
    </location>
</feature>
<accession>Q9U660</accession>
<organism>
    <name type="scientific">Conus pennaceus</name>
    <name type="common">Feathered cone</name>
    <name type="synonym">Conus episcopus</name>
    <dbReference type="NCBI Taxonomy" id="37335"/>
    <lineage>
        <taxon>Eukaryota</taxon>
        <taxon>Metazoa</taxon>
        <taxon>Spiralia</taxon>
        <taxon>Lophotrochozoa</taxon>
        <taxon>Mollusca</taxon>
        <taxon>Gastropoda</taxon>
        <taxon>Caenogastropoda</taxon>
        <taxon>Neogastropoda</taxon>
        <taxon>Conoidea</taxon>
        <taxon>Conidae</taxon>
        <taxon>Conus</taxon>
        <taxon>Darioconus</taxon>
    </lineage>
</organism>
<keyword id="KW-0165">Cleavage on pair of basic residues</keyword>
<keyword id="KW-1015">Disulfide bond</keyword>
<keyword id="KW-0960">Knottin</keyword>
<keyword id="KW-0528">Neurotoxin</keyword>
<keyword id="KW-0964">Secreted</keyword>
<keyword id="KW-0732">Signal</keyword>
<keyword id="KW-0800">Toxin</keyword>
<name>O1613_CONPE</name>
<protein>
    <recommendedName>
        <fullName>Conotoxin PnMKLT1-0121</fullName>
    </recommendedName>
</protein>
<sequence>MKLTCMMIVAVLFLTAWTFATADDPRNRLENFFSKTQHEMKNPEASKLNKRCIAESEPCNIITQNCCDGKCLFFCIQIPE</sequence>
<reference key="1">
    <citation type="journal article" date="2001" name="Mol. Biol. Evol.">
        <title>Mechanisms for evolving hypervariability: the case of conopeptides.</title>
        <authorList>
            <person name="Conticello S.G."/>
            <person name="Gilad Y."/>
            <person name="Avidan N."/>
            <person name="Ben-Asher E."/>
            <person name="Levy Z."/>
            <person name="Fainzilber M."/>
        </authorList>
    </citation>
    <scope>NUCLEOTIDE SEQUENCE [MRNA]</scope>
    <source>
        <tissue>Venom duct</tissue>
    </source>
</reference>
<proteinExistence type="evidence at transcript level"/>
<dbReference type="EMBL" id="AF193256">
    <property type="protein sequence ID" value="AAF07967.1"/>
    <property type="molecule type" value="mRNA"/>
</dbReference>
<dbReference type="SMR" id="Q9U660"/>
<dbReference type="ConoServer" id="1089">
    <property type="toxin name" value="Pn6.13 precursor"/>
</dbReference>
<dbReference type="GO" id="GO:0005576">
    <property type="term" value="C:extracellular region"/>
    <property type="evidence" value="ECO:0007669"/>
    <property type="project" value="UniProtKB-SubCell"/>
</dbReference>
<dbReference type="GO" id="GO:0008200">
    <property type="term" value="F:ion channel inhibitor activity"/>
    <property type="evidence" value="ECO:0007669"/>
    <property type="project" value="InterPro"/>
</dbReference>
<dbReference type="GO" id="GO:0090729">
    <property type="term" value="F:toxin activity"/>
    <property type="evidence" value="ECO:0007669"/>
    <property type="project" value="UniProtKB-KW"/>
</dbReference>
<dbReference type="InterPro" id="IPR004214">
    <property type="entry name" value="Conotoxin"/>
</dbReference>
<dbReference type="Pfam" id="PF02950">
    <property type="entry name" value="Conotoxin"/>
    <property type="match status" value="1"/>
</dbReference>
<comment type="subcellular location">
    <subcellularLocation>
        <location evidence="1">Secreted</location>
    </subcellularLocation>
</comment>
<comment type="tissue specificity">
    <text>Expressed by the venom duct.</text>
</comment>
<comment type="domain">
    <text evidence="1">The presence of a 'disulfide through disulfide knot' structurally defines this protein as a knottin.</text>
</comment>
<comment type="domain">
    <text>The cysteine framework is VI/VII (C-C-CC-C-C).</text>
</comment>
<comment type="similarity">
    <text evidence="3">Belongs to the conotoxin O1 superfamily.</text>
</comment>